<proteinExistence type="inferred from homology"/>
<accession>A2RYI3</accession>
<keyword id="KW-0028">Amino-acid biosynthesis</keyword>
<keyword id="KW-0057">Aromatic amino acid biosynthesis</keyword>
<keyword id="KW-0210">Decarboxylase</keyword>
<keyword id="KW-0456">Lyase</keyword>
<keyword id="KW-0822">Tryptophan biosynthesis</keyword>
<feature type="chain" id="PRO_1000018455" description="Indole-3-glycerol phosphate synthase">
    <location>
        <begin position="1"/>
        <end position="261"/>
    </location>
</feature>
<protein>
    <recommendedName>
        <fullName evidence="1">Indole-3-glycerol phosphate synthase</fullName>
        <shortName evidence="1">IGPS</shortName>
        <ecNumber evidence="1">4.1.1.48</ecNumber>
    </recommendedName>
</protein>
<evidence type="ECO:0000255" key="1">
    <source>
        <dbReference type="HAMAP-Rule" id="MF_00134"/>
    </source>
</evidence>
<reference key="1">
    <citation type="journal article" date="2010" name="Genome Biol. Evol.">
        <title>Continuing evolution of Burkholderia mallei through genome reduction and large-scale rearrangements.</title>
        <authorList>
            <person name="Losada L."/>
            <person name="Ronning C.M."/>
            <person name="DeShazer D."/>
            <person name="Woods D."/>
            <person name="Fedorova N."/>
            <person name="Kim H.S."/>
            <person name="Shabalina S.A."/>
            <person name="Pearson T.R."/>
            <person name="Brinkac L."/>
            <person name="Tan P."/>
            <person name="Nandi T."/>
            <person name="Crabtree J."/>
            <person name="Badger J."/>
            <person name="Beckstrom-Sternberg S."/>
            <person name="Saqib M."/>
            <person name="Schutzer S.E."/>
            <person name="Keim P."/>
            <person name="Nierman W.C."/>
        </authorList>
    </citation>
    <scope>NUCLEOTIDE SEQUENCE [LARGE SCALE GENOMIC DNA]</scope>
    <source>
        <strain>NCTC 10229</strain>
    </source>
</reference>
<name>TRPC_BURM9</name>
<dbReference type="EC" id="4.1.1.48" evidence="1"/>
<dbReference type="EMBL" id="CP000545">
    <property type="protein sequence ID" value="ABM99228.1"/>
    <property type="molecule type" value="Genomic_DNA"/>
</dbReference>
<dbReference type="RefSeq" id="WP_004186826.1">
    <property type="nucleotide sequence ID" value="NC_008835.1"/>
</dbReference>
<dbReference type="SMR" id="A2RYI3"/>
<dbReference type="GeneID" id="92976776"/>
<dbReference type="KEGG" id="bml:BMA10229_0943"/>
<dbReference type="HOGENOM" id="CLU_034247_2_0_4"/>
<dbReference type="UniPathway" id="UPA00035">
    <property type="reaction ID" value="UER00043"/>
</dbReference>
<dbReference type="Proteomes" id="UP000002283">
    <property type="component" value="Chromosome II"/>
</dbReference>
<dbReference type="GO" id="GO:0004425">
    <property type="term" value="F:indole-3-glycerol-phosphate synthase activity"/>
    <property type="evidence" value="ECO:0007669"/>
    <property type="project" value="UniProtKB-UniRule"/>
</dbReference>
<dbReference type="GO" id="GO:0004640">
    <property type="term" value="F:phosphoribosylanthranilate isomerase activity"/>
    <property type="evidence" value="ECO:0007669"/>
    <property type="project" value="TreeGrafter"/>
</dbReference>
<dbReference type="GO" id="GO:0000162">
    <property type="term" value="P:L-tryptophan biosynthetic process"/>
    <property type="evidence" value="ECO:0007669"/>
    <property type="project" value="UniProtKB-UniRule"/>
</dbReference>
<dbReference type="CDD" id="cd00331">
    <property type="entry name" value="IGPS"/>
    <property type="match status" value="1"/>
</dbReference>
<dbReference type="FunFam" id="3.20.20.70:FF:000024">
    <property type="entry name" value="Indole-3-glycerol phosphate synthase"/>
    <property type="match status" value="1"/>
</dbReference>
<dbReference type="Gene3D" id="3.20.20.70">
    <property type="entry name" value="Aldolase class I"/>
    <property type="match status" value="1"/>
</dbReference>
<dbReference type="HAMAP" id="MF_00134_B">
    <property type="entry name" value="IGPS_B"/>
    <property type="match status" value="1"/>
</dbReference>
<dbReference type="InterPro" id="IPR013785">
    <property type="entry name" value="Aldolase_TIM"/>
</dbReference>
<dbReference type="InterPro" id="IPR045186">
    <property type="entry name" value="Indole-3-glycerol_P_synth"/>
</dbReference>
<dbReference type="InterPro" id="IPR013798">
    <property type="entry name" value="Indole-3-glycerol_P_synth_dom"/>
</dbReference>
<dbReference type="InterPro" id="IPR001468">
    <property type="entry name" value="Indole-3-GlycerolPSynthase_CS"/>
</dbReference>
<dbReference type="InterPro" id="IPR011060">
    <property type="entry name" value="RibuloseP-bd_barrel"/>
</dbReference>
<dbReference type="NCBIfam" id="NF001373">
    <property type="entry name" value="PRK00278.1-6"/>
    <property type="match status" value="1"/>
</dbReference>
<dbReference type="NCBIfam" id="NF001377">
    <property type="entry name" value="PRK00278.2-4"/>
    <property type="match status" value="1"/>
</dbReference>
<dbReference type="PANTHER" id="PTHR22854:SF2">
    <property type="entry name" value="INDOLE-3-GLYCEROL-PHOSPHATE SYNTHASE"/>
    <property type="match status" value="1"/>
</dbReference>
<dbReference type="PANTHER" id="PTHR22854">
    <property type="entry name" value="TRYPTOPHAN BIOSYNTHESIS PROTEIN"/>
    <property type="match status" value="1"/>
</dbReference>
<dbReference type="Pfam" id="PF00218">
    <property type="entry name" value="IGPS"/>
    <property type="match status" value="1"/>
</dbReference>
<dbReference type="SUPFAM" id="SSF51366">
    <property type="entry name" value="Ribulose-phoshate binding barrel"/>
    <property type="match status" value="1"/>
</dbReference>
<dbReference type="PROSITE" id="PS00614">
    <property type="entry name" value="IGPS"/>
    <property type="match status" value="1"/>
</dbReference>
<organism>
    <name type="scientific">Burkholderia mallei (strain NCTC 10229)</name>
    <dbReference type="NCBI Taxonomy" id="412022"/>
    <lineage>
        <taxon>Bacteria</taxon>
        <taxon>Pseudomonadati</taxon>
        <taxon>Pseudomonadota</taxon>
        <taxon>Betaproteobacteria</taxon>
        <taxon>Burkholderiales</taxon>
        <taxon>Burkholderiaceae</taxon>
        <taxon>Burkholderia</taxon>
        <taxon>pseudomallei group</taxon>
    </lineage>
</organism>
<sequence>MSDILDKIIAVKREEIAAALESAPLEELKVQASARDSRDFVGALRDKHAAGHAAVIAEVKKASPSKGVLREHFVPADIARSYAQHGAACLSVLTDERFFQGSARYLEQARAACTLPVLRKDFIVDAYQLLEARAMGADAILLIAAALDTPLMIDLEAYAHSLGLAVLVEVHNRGELDEALKLKTPFVGINNRNLRTFETTIDTTLGMLDAIPDDRIVVTESGILSRADVERMEAAGVHTFLVGEAFMRAENPGAELARMFF</sequence>
<comment type="catalytic activity">
    <reaction evidence="1">
        <text>1-(2-carboxyphenylamino)-1-deoxy-D-ribulose 5-phosphate + H(+) = (1S,2R)-1-C-(indol-3-yl)glycerol 3-phosphate + CO2 + H2O</text>
        <dbReference type="Rhea" id="RHEA:23476"/>
        <dbReference type="ChEBI" id="CHEBI:15377"/>
        <dbReference type="ChEBI" id="CHEBI:15378"/>
        <dbReference type="ChEBI" id="CHEBI:16526"/>
        <dbReference type="ChEBI" id="CHEBI:58613"/>
        <dbReference type="ChEBI" id="CHEBI:58866"/>
        <dbReference type="EC" id="4.1.1.48"/>
    </reaction>
</comment>
<comment type="pathway">
    <text evidence="1">Amino-acid biosynthesis; L-tryptophan biosynthesis; L-tryptophan from chorismate: step 4/5.</text>
</comment>
<comment type="similarity">
    <text evidence="1">Belongs to the TrpC family.</text>
</comment>
<gene>
    <name evidence="1" type="primary">trpC</name>
    <name type="ordered locus">BMA10229_0943</name>
</gene>